<accession>P30189</accession>
<accession>Q9VXW6</accession>
<feature type="chain" id="PRO_0000145205" description="DNA topoisomerase 1">
    <location>
        <begin position="1"/>
        <end position="972"/>
    </location>
</feature>
<feature type="domain" description="Topo IB-type catalytic" evidence="3">
    <location>
        <begin position="655"/>
        <end position="972"/>
    </location>
</feature>
<feature type="region of interest" description="Disordered" evidence="5">
    <location>
        <begin position="1"/>
        <end position="210"/>
    </location>
</feature>
<feature type="region of interest" description="Disordered" evidence="5">
    <location>
        <begin position="300"/>
        <end position="416"/>
    </location>
</feature>
<feature type="region of interest" description="Interaction with DNA" evidence="1">
    <location>
        <begin position="648"/>
        <end position="649"/>
    </location>
</feature>
<feature type="region of interest" description="Interaction with DNA" evidence="1">
    <location>
        <begin position="711"/>
        <end position="716"/>
    </location>
</feature>
<feature type="region of interest" description="Interaction with DNA" evidence="1">
    <location>
        <begin position="807"/>
        <end position="809"/>
    </location>
</feature>
<feature type="compositionally biased region" description="Polar residues" evidence="5">
    <location>
        <begin position="11"/>
        <end position="31"/>
    </location>
</feature>
<feature type="compositionally biased region" description="Basic residues" evidence="5">
    <location>
        <begin position="32"/>
        <end position="50"/>
    </location>
</feature>
<feature type="compositionally biased region" description="Basic and acidic residues" evidence="5">
    <location>
        <begin position="51"/>
        <end position="65"/>
    </location>
</feature>
<feature type="compositionally biased region" description="Basic and acidic residues" evidence="5">
    <location>
        <begin position="72"/>
        <end position="86"/>
    </location>
</feature>
<feature type="compositionally biased region" description="Basic and acidic residues" evidence="5">
    <location>
        <begin position="93"/>
        <end position="103"/>
    </location>
</feature>
<feature type="compositionally biased region" description="Low complexity" evidence="5">
    <location>
        <begin position="104"/>
        <end position="114"/>
    </location>
</feature>
<feature type="compositionally biased region" description="Basic residues" evidence="5">
    <location>
        <begin position="125"/>
        <end position="138"/>
    </location>
</feature>
<feature type="compositionally biased region" description="Basic and acidic residues" evidence="5">
    <location>
        <begin position="139"/>
        <end position="151"/>
    </location>
</feature>
<feature type="compositionally biased region" description="Low complexity" evidence="5">
    <location>
        <begin position="173"/>
        <end position="183"/>
    </location>
</feature>
<feature type="compositionally biased region" description="Acidic residues" evidence="5">
    <location>
        <begin position="316"/>
        <end position="330"/>
    </location>
</feature>
<feature type="active site" description="O-(3'-phospho-DNA)-tyrosine intermediate" evidence="3 4">
    <location>
        <position position="930"/>
    </location>
</feature>
<feature type="site" description="Interaction with DNA" evidence="1">
    <location>
        <position position="539"/>
    </location>
</feature>
<feature type="site" description="Interaction with DNA" evidence="1">
    <location>
        <position position="587"/>
    </location>
</feature>
<feature type="site" description="Interaction with DNA" evidence="1">
    <location>
        <position position="635"/>
    </location>
</feature>
<feature type="site" description="Interaction with DNA" evidence="1">
    <location>
        <position position="666"/>
    </location>
</feature>
<feature type="site" description="Interaction with DNA" evidence="1">
    <location>
        <position position="723"/>
    </location>
</feature>
<feature type="site" description="Interaction with DNA" evidence="1">
    <location>
        <position position="754"/>
    </location>
</feature>
<feature type="site" description="Interaction with DNA" evidence="1">
    <location>
        <position position="796"/>
    </location>
</feature>
<feature type="site" description="Interaction with DNA" evidence="1">
    <location>
        <position position="854"/>
    </location>
</feature>
<feature type="site" description="Interaction with DNA" evidence="1">
    <location>
        <position position="872"/>
    </location>
</feature>
<feature type="modified residue" description="Phosphoserine" evidence="8">
    <location>
        <position position="303"/>
    </location>
</feature>
<feature type="modified residue" description="Phosphotyrosine" evidence="8">
    <location>
        <position position="304"/>
    </location>
</feature>
<feature type="sequence conflict" description="In Ref. 3; AAF48440." evidence="9" ref="3">
    <original>S</original>
    <variation>H</variation>
    <location>
        <position position="40"/>
    </location>
</feature>
<feature type="sequence conflict" description="In Ref. 3; AAF48440." evidence="9" ref="3">
    <original>S</original>
    <variation>SSS</variation>
    <location>
        <position position="46"/>
    </location>
</feature>
<feature type="sequence conflict" description="In Ref. 3; AAF48440." evidence="9" ref="3">
    <original>H</original>
    <variation>Q</variation>
    <location>
        <position position="201"/>
    </location>
</feature>
<sequence length="972" mass="111688">MSGDVAAENSIHIQNGGSCEVVQSNGVTTNGHGHHHHHHSSSSSSSKHKSSSKDKHRDREREHKSSNSSSSSKEHKSSSRDKDRHKSSSSSSKHRDKDKERDGSSNSHRSGSSSSHKDKDGSSSSKHKSSSGHHKRSSKDKERRDKDKDRGSSSSSRHKSSSSSRDKERSSSSHKSSSSSSSSKSKHSSSRHSSSSSSKDHPSYDGVFVKPEPVSQQLMHSGSVDAFQMQQLGSYEAAAAGTNFNGNGNVAGANYKNGYEESIVDIKKEEESFNNLSQASSCDYSMSQFRADEPPFVVKHEQSYAEEDSTMNYNDHDDDADEMNDDEEDVPLAMRKRKQEATDRPDGGMDNDDDDDIPLLARKKVKKEKIKKESKEKSKKRVKEEPSDDYGNVKPKKKKMKKEPEPAVSPGKRQKAKAKVEEEEVWRWWEEEKRADGVKWSTLEHKGPVFAPRYERVPRNVRFYYDGKPLELSEETEEAATFYAKMLNHDYCTKEVFNNNFFKDFRKSMTPREREIIKDFRKCNFQEMFNYFQAESEKRKAASKEEKLIKKNENEALMKEFGFCMIDGHKEKIGNFRLEPPGLFRGRGEHPKMGMIKRRIQASDVSINCGKDSKVPSPPPGSRWKEVRHDNTVTWLASWIENVQGQVKYIMLNPSSKLKGEKDHIKYETARRLDKVIDKIRATYRDEWKSKEMRVRQRAVALYFIDKLALRAGNEKDEDQADTVGCCSLRVEHVQLHKELNGKENVVVFDFPGKDSIRYYNEVEVEKRVFKNLELFMEHKKEGDDLFDRLNTQVLNEHLKELMEGLTAKVFRTYNASKTLQSQLDLLTDPSATVPEKLLAYNRANRAVAILCNHQRSVPKSHEKSMENLKEKIKAKREAIEKCESEYHSRDEKKGKQLERLRDQLKKLELQETDRDENKTIALGTSKLNYLDPRISVAWCKKHDVPIEKIFNKTQRTKFLWAVHMADENYRF</sequence>
<proteinExistence type="evidence at protein level"/>
<organism>
    <name type="scientific">Drosophila melanogaster</name>
    <name type="common">Fruit fly</name>
    <dbReference type="NCBI Taxonomy" id="7227"/>
    <lineage>
        <taxon>Eukaryota</taxon>
        <taxon>Metazoa</taxon>
        <taxon>Ecdysozoa</taxon>
        <taxon>Arthropoda</taxon>
        <taxon>Hexapoda</taxon>
        <taxon>Insecta</taxon>
        <taxon>Pterygota</taxon>
        <taxon>Neoptera</taxon>
        <taxon>Endopterygota</taxon>
        <taxon>Diptera</taxon>
        <taxon>Brachycera</taxon>
        <taxon>Muscomorpha</taxon>
        <taxon>Ephydroidea</taxon>
        <taxon>Drosophilidae</taxon>
        <taxon>Drosophila</taxon>
        <taxon>Sophophora</taxon>
    </lineage>
</organism>
<keyword id="KW-0963">Cytoplasm</keyword>
<keyword id="KW-0238">DNA-binding</keyword>
<keyword id="KW-0413">Isomerase</keyword>
<keyword id="KW-0539">Nucleus</keyword>
<keyword id="KW-0597">Phosphoprotein</keyword>
<keyword id="KW-1185">Reference proteome</keyword>
<keyword id="KW-0799">Topoisomerase</keyword>
<protein>
    <recommendedName>
        <fullName>DNA topoisomerase 1</fullName>
        <ecNumber evidence="4">5.6.2.1</ecNumber>
    </recommendedName>
    <alternativeName>
        <fullName>DNA topoisomerase I</fullName>
    </alternativeName>
</protein>
<reference key="1">
    <citation type="journal article" date="1992" name="Nucleic Acids Res.">
        <title>Isolation and characterization of a gene encoding DNA topoisomerase I in Drosophila melanogaster.</title>
        <authorList>
            <person name="Hsieh T.-S."/>
            <person name="Brown S.D."/>
            <person name="Huang P."/>
            <person name="Fostel J."/>
        </authorList>
    </citation>
    <scope>NUCLEOTIDE SEQUENCE [MRNA]</scope>
</reference>
<reference key="2">
    <citation type="journal article" date="1996" name="J. Cell Biol.">
        <title>Isolation and characterization of a Drosophila gene essential for early embryonic development and formation of cortical cleavage furrows.</title>
        <authorList>
            <person name="Zhang C.X."/>
            <person name="Lee M.P."/>
            <person name="Chen A.D."/>
            <person name="Brown S.D."/>
            <person name="Hsieh T.-S."/>
        </authorList>
    </citation>
    <scope>NUCLEOTIDE SEQUENCE [GENOMIC DNA]</scope>
    <source>
        <strain>Oregon-R</strain>
    </source>
</reference>
<reference key="3">
    <citation type="journal article" date="2000" name="Science">
        <title>The genome sequence of Drosophila melanogaster.</title>
        <authorList>
            <person name="Adams M.D."/>
            <person name="Celniker S.E."/>
            <person name="Holt R.A."/>
            <person name="Evans C.A."/>
            <person name="Gocayne J.D."/>
            <person name="Amanatides P.G."/>
            <person name="Scherer S.E."/>
            <person name="Li P.W."/>
            <person name="Hoskins R.A."/>
            <person name="Galle R.F."/>
            <person name="George R.A."/>
            <person name="Lewis S.E."/>
            <person name="Richards S."/>
            <person name="Ashburner M."/>
            <person name="Henderson S.N."/>
            <person name="Sutton G.G."/>
            <person name="Wortman J.R."/>
            <person name="Yandell M.D."/>
            <person name="Zhang Q."/>
            <person name="Chen L.X."/>
            <person name="Brandon R.C."/>
            <person name="Rogers Y.-H.C."/>
            <person name="Blazej R.G."/>
            <person name="Champe M."/>
            <person name="Pfeiffer B.D."/>
            <person name="Wan K.H."/>
            <person name="Doyle C."/>
            <person name="Baxter E.G."/>
            <person name="Helt G."/>
            <person name="Nelson C.R."/>
            <person name="Miklos G.L.G."/>
            <person name="Abril J.F."/>
            <person name="Agbayani A."/>
            <person name="An H.-J."/>
            <person name="Andrews-Pfannkoch C."/>
            <person name="Baldwin D."/>
            <person name="Ballew R.M."/>
            <person name="Basu A."/>
            <person name="Baxendale J."/>
            <person name="Bayraktaroglu L."/>
            <person name="Beasley E.M."/>
            <person name="Beeson K.Y."/>
            <person name="Benos P.V."/>
            <person name="Berman B.P."/>
            <person name="Bhandari D."/>
            <person name="Bolshakov S."/>
            <person name="Borkova D."/>
            <person name="Botchan M.R."/>
            <person name="Bouck J."/>
            <person name="Brokstein P."/>
            <person name="Brottier P."/>
            <person name="Burtis K.C."/>
            <person name="Busam D.A."/>
            <person name="Butler H."/>
            <person name="Cadieu E."/>
            <person name="Center A."/>
            <person name="Chandra I."/>
            <person name="Cherry J.M."/>
            <person name="Cawley S."/>
            <person name="Dahlke C."/>
            <person name="Davenport L.B."/>
            <person name="Davies P."/>
            <person name="de Pablos B."/>
            <person name="Delcher A."/>
            <person name="Deng Z."/>
            <person name="Mays A.D."/>
            <person name="Dew I."/>
            <person name="Dietz S.M."/>
            <person name="Dodson K."/>
            <person name="Doup L.E."/>
            <person name="Downes M."/>
            <person name="Dugan-Rocha S."/>
            <person name="Dunkov B.C."/>
            <person name="Dunn P."/>
            <person name="Durbin K.J."/>
            <person name="Evangelista C.C."/>
            <person name="Ferraz C."/>
            <person name="Ferriera S."/>
            <person name="Fleischmann W."/>
            <person name="Fosler C."/>
            <person name="Gabrielian A.E."/>
            <person name="Garg N.S."/>
            <person name="Gelbart W.M."/>
            <person name="Glasser K."/>
            <person name="Glodek A."/>
            <person name="Gong F."/>
            <person name="Gorrell J.H."/>
            <person name="Gu Z."/>
            <person name="Guan P."/>
            <person name="Harris M."/>
            <person name="Harris N.L."/>
            <person name="Harvey D.A."/>
            <person name="Heiman T.J."/>
            <person name="Hernandez J.R."/>
            <person name="Houck J."/>
            <person name="Hostin D."/>
            <person name="Houston K.A."/>
            <person name="Howland T.J."/>
            <person name="Wei M.-H."/>
            <person name="Ibegwam C."/>
            <person name="Jalali M."/>
            <person name="Kalush F."/>
            <person name="Karpen G.H."/>
            <person name="Ke Z."/>
            <person name="Kennison J.A."/>
            <person name="Ketchum K.A."/>
            <person name="Kimmel B.E."/>
            <person name="Kodira C.D."/>
            <person name="Kraft C.L."/>
            <person name="Kravitz S."/>
            <person name="Kulp D."/>
            <person name="Lai Z."/>
            <person name="Lasko P."/>
            <person name="Lei Y."/>
            <person name="Levitsky A.A."/>
            <person name="Li J.H."/>
            <person name="Li Z."/>
            <person name="Liang Y."/>
            <person name="Lin X."/>
            <person name="Liu X."/>
            <person name="Mattei B."/>
            <person name="McIntosh T.C."/>
            <person name="McLeod M.P."/>
            <person name="McPherson D."/>
            <person name="Merkulov G."/>
            <person name="Milshina N.V."/>
            <person name="Mobarry C."/>
            <person name="Morris J."/>
            <person name="Moshrefi A."/>
            <person name="Mount S.M."/>
            <person name="Moy M."/>
            <person name="Murphy B."/>
            <person name="Murphy L."/>
            <person name="Muzny D.M."/>
            <person name="Nelson D.L."/>
            <person name="Nelson D.R."/>
            <person name="Nelson K.A."/>
            <person name="Nixon K."/>
            <person name="Nusskern D.R."/>
            <person name="Pacleb J.M."/>
            <person name="Palazzolo M."/>
            <person name="Pittman G.S."/>
            <person name="Pan S."/>
            <person name="Pollard J."/>
            <person name="Puri V."/>
            <person name="Reese M.G."/>
            <person name="Reinert K."/>
            <person name="Remington K."/>
            <person name="Saunders R.D.C."/>
            <person name="Scheeler F."/>
            <person name="Shen H."/>
            <person name="Shue B.C."/>
            <person name="Siden-Kiamos I."/>
            <person name="Simpson M."/>
            <person name="Skupski M.P."/>
            <person name="Smith T.J."/>
            <person name="Spier E."/>
            <person name="Spradling A.C."/>
            <person name="Stapleton M."/>
            <person name="Strong R."/>
            <person name="Sun E."/>
            <person name="Svirskas R."/>
            <person name="Tector C."/>
            <person name="Turner R."/>
            <person name="Venter E."/>
            <person name="Wang A.H."/>
            <person name="Wang X."/>
            <person name="Wang Z.-Y."/>
            <person name="Wassarman D.A."/>
            <person name="Weinstock G.M."/>
            <person name="Weissenbach J."/>
            <person name="Williams S.M."/>
            <person name="Woodage T."/>
            <person name="Worley K.C."/>
            <person name="Wu D."/>
            <person name="Yang S."/>
            <person name="Yao Q.A."/>
            <person name="Ye J."/>
            <person name="Yeh R.-F."/>
            <person name="Zaveri J.S."/>
            <person name="Zhan M."/>
            <person name="Zhang G."/>
            <person name="Zhao Q."/>
            <person name="Zheng L."/>
            <person name="Zheng X.H."/>
            <person name="Zhong F.N."/>
            <person name="Zhong W."/>
            <person name="Zhou X."/>
            <person name="Zhu S.C."/>
            <person name="Zhu X."/>
            <person name="Smith H.O."/>
            <person name="Gibbs R.A."/>
            <person name="Myers E.W."/>
            <person name="Rubin G.M."/>
            <person name="Venter J.C."/>
        </authorList>
    </citation>
    <scope>NUCLEOTIDE SEQUENCE [LARGE SCALE GENOMIC DNA]</scope>
    <source>
        <strain>Berkeley</strain>
    </source>
</reference>
<reference key="4">
    <citation type="journal article" date="2002" name="Genome Biol.">
        <title>Annotation of the Drosophila melanogaster euchromatic genome: a systematic review.</title>
        <authorList>
            <person name="Misra S."/>
            <person name="Crosby M.A."/>
            <person name="Mungall C.J."/>
            <person name="Matthews B.B."/>
            <person name="Campbell K.S."/>
            <person name="Hradecky P."/>
            <person name="Huang Y."/>
            <person name="Kaminker J.S."/>
            <person name="Millburn G.H."/>
            <person name="Prochnik S.E."/>
            <person name="Smith C.D."/>
            <person name="Tupy J.L."/>
            <person name="Whitfield E.J."/>
            <person name="Bayraktaroglu L."/>
            <person name="Berman B.P."/>
            <person name="Bettencourt B.R."/>
            <person name="Celniker S.E."/>
            <person name="de Grey A.D.N.J."/>
            <person name="Drysdale R.A."/>
            <person name="Harris N.L."/>
            <person name="Richter J."/>
            <person name="Russo S."/>
            <person name="Schroeder A.J."/>
            <person name="Shu S.Q."/>
            <person name="Stapleton M."/>
            <person name="Yamada C."/>
            <person name="Ashburner M."/>
            <person name="Gelbart W.M."/>
            <person name="Rubin G.M."/>
            <person name="Lewis S.E."/>
        </authorList>
    </citation>
    <scope>GENOME REANNOTATION</scope>
    <source>
        <strain>Berkeley</strain>
    </source>
</reference>
<reference key="5">
    <citation type="journal article" date="2000" name="Dev. Biol.">
        <title>Essential functions of DNA topoisomerase I in Drosophila melanogaster.</title>
        <authorList>
            <person name="Zhang C.X."/>
            <person name="Chen A.D."/>
            <person name="Gettel N.J."/>
            <person name="Hsieh T.S."/>
        </authorList>
    </citation>
    <scope>SUBCELLULAR LOCATION</scope>
    <scope>DEVELOPMENTAL STAGE</scope>
</reference>
<reference key="6">
    <citation type="journal article" date="2004" name="J. Biol. Chem.">
        <title>Drosophila Topors is a RING finger-containing protein that functions as a ubiquitin-protein isopeptide ligase for the hairy basic helix-loop-helix repressor protein.</title>
        <authorList>
            <person name="Secombe J."/>
            <person name="Parkhurst S.M."/>
        </authorList>
    </citation>
    <scope>INTERACTION WITH TOPORS</scope>
</reference>
<reference key="7">
    <citation type="journal article" date="2008" name="J. Proteome Res.">
        <title>Phosphoproteome analysis of Drosophila melanogaster embryos.</title>
        <authorList>
            <person name="Zhai B."/>
            <person name="Villen J."/>
            <person name="Beausoleil S.A."/>
            <person name="Mintseris J."/>
            <person name="Gygi S.P."/>
        </authorList>
    </citation>
    <scope>PHOSPHORYLATION [LARGE SCALE ANALYSIS] AT SER-303 AND TYR-304</scope>
    <scope>IDENTIFICATION BY MASS SPECTROMETRY</scope>
    <source>
        <tissue>Embryo</tissue>
    </source>
</reference>
<dbReference type="EC" id="5.6.2.1" evidence="4"/>
<dbReference type="EMBL" id="M74557">
    <property type="protein sequence ID" value="AAA28951.1"/>
    <property type="molecule type" value="mRNA"/>
</dbReference>
<dbReference type="EMBL" id="U80064">
    <property type="protein sequence ID" value="AAC24158.1"/>
    <property type="molecule type" value="Genomic_DNA"/>
</dbReference>
<dbReference type="EMBL" id="AE014298">
    <property type="protein sequence ID" value="AAF48440.1"/>
    <property type="molecule type" value="Genomic_DNA"/>
</dbReference>
<dbReference type="PIR" id="S35521">
    <property type="entry name" value="S35521"/>
</dbReference>
<dbReference type="RefSeq" id="NP_001014742.1">
    <property type="nucleotide sequence ID" value="NM_001014742.2"/>
</dbReference>
<dbReference type="RefSeq" id="NP_511161.2">
    <property type="nucleotide sequence ID" value="NM_078606.4"/>
</dbReference>
<dbReference type="SMR" id="P30189"/>
<dbReference type="BioGRID" id="58813">
    <property type="interactions" value="12"/>
</dbReference>
<dbReference type="FunCoup" id="P30189">
    <property type="interactions" value="1179"/>
</dbReference>
<dbReference type="IntAct" id="P30189">
    <property type="interactions" value="34"/>
</dbReference>
<dbReference type="STRING" id="7227.FBpp0099689"/>
<dbReference type="iPTMnet" id="P30189"/>
<dbReference type="PaxDb" id="7227-FBpp0073822"/>
<dbReference type="DNASU" id="32458"/>
<dbReference type="GeneID" id="32458"/>
<dbReference type="KEGG" id="dme:Dmel_CG6146"/>
<dbReference type="AGR" id="FB:FBgn0004924"/>
<dbReference type="CTD" id="7150"/>
<dbReference type="FlyBase" id="FBgn0004924">
    <property type="gene designation" value="Top1"/>
</dbReference>
<dbReference type="VEuPathDB" id="VectorBase:FBgn0004924"/>
<dbReference type="eggNOG" id="KOG0981">
    <property type="taxonomic scope" value="Eukaryota"/>
</dbReference>
<dbReference type="HOGENOM" id="CLU_009193_0_0_1"/>
<dbReference type="InParanoid" id="P30189"/>
<dbReference type="OrthoDB" id="47179at2759"/>
<dbReference type="PhylomeDB" id="P30189"/>
<dbReference type="BioGRID-ORCS" id="32458">
    <property type="hits" value="0 hits in 3 CRISPR screens"/>
</dbReference>
<dbReference type="ChiTaRS" id="Top1">
    <property type="organism name" value="fly"/>
</dbReference>
<dbReference type="GenomeRNAi" id="32458"/>
<dbReference type="PRO" id="PR:P30189"/>
<dbReference type="Proteomes" id="UP000000803">
    <property type="component" value="Chromosome X"/>
</dbReference>
<dbReference type="ExpressionAtlas" id="P30189">
    <property type="expression patterns" value="baseline and differential"/>
</dbReference>
<dbReference type="GO" id="GO:0000785">
    <property type="term" value="C:chromatin"/>
    <property type="evidence" value="ECO:0000314"/>
    <property type="project" value="FlyBase"/>
</dbReference>
<dbReference type="GO" id="GO:0005737">
    <property type="term" value="C:cytoplasm"/>
    <property type="evidence" value="ECO:0000314"/>
    <property type="project" value="FlyBase"/>
</dbReference>
<dbReference type="GO" id="GO:0005829">
    <property type="term" value="C:cytosol"/>
    <property type="evidence" value="ECO:0007005"/>
    <property type="project" value="FlyBase"/>
</dbReference>
<dbReference type="GO" id="GO:0000791">
    <property type="term" value="C:euchromatin"/>
    <property type="evidence" value="ECO:0000314"/>
    <property type="project" value="FlyBase"/>
</dbReference>
<dbReference type="GO" id="GO:0030874">
    <property type="term" value="C:nucleolar chromatin"/>
    <property type="evidence" value="ECO:0000314"/>
    <property type="project" value="FlyBase"/>
</dbReference>
<dbReference type="GO" id="GO:0005730">
    <property type="term" value="C:nucleolus"/>
    <property type="evidence" value="ECO:0000314"/>
    <property type="project" value="FlyBase"/>
</dbReference>
<dbReference type="GO" id="GO:0005634">
    <property type="term" value="C:nucleus"/>
    <property type="evidence" value="ECO:0000314"/>
    <property type="project" value="FlyBase"/>
</dbReference>
<dbReference type="GO" id="GO:0003677">
    <property type="term" value="F:DNA binding"/>
    <property type="evidence" value="ECO:0007669"/>
    <property type="project" value="UniProtKB-KW"/>
</dbReference>
<dbReference type="GO" id="GO:0003916">
    <property type="term" value="F:DNA topoisomerase activity"/>
    <property type="evidence" value="ECO:0000314"/>
    <property type="project" value="FlyBase"/>
</dbReference>
<dbReference type="GO" id="GO:0003917">
    <property type="term" value="F:DNA topoisomerase type I (single strand cut, ATP-independent) activity"/>
    <property type="evidence" value="ECO:0000314"/>
    <property type="project" value="FlyBase"/>
</dbReference>
<dbReference type="GO" id="GO:0030261">
    <property type="term" value="P:chromosome condensation"/>
    <property type="evidence" value="ECO:0000315"/>
    <property type="project" value="FlyBase"/>
</dbReference>
<dbReference type="GO" id="GO:0007059">
    <property type="term" value="P:chromosome segregation"/>
    <property type="evidence" value="ECO:0000315"/>
    <property type="project" value="FlyBase"/>
</dbReference>
<dbReference type="GO" id="GO:0006260">
    <property type="term" value="P:DNA replication"/>
    <property type="evidence" value="ECO:0000318"/>
    <property type="project" value="GO_Central"/>
</dbReference>
<dbReference type="GO" id="GO:0006265">
    <property type="term" value="P:DNA topological change"/>
    <property type="evidence" value="ECO:0000314"/>
    <property type="project" value="FlyBase"/>
</dbReference>
<dbReference type="GO" id="GO:0002168">
    <property type="term" value="P:instar larval development"/>
    <property type="evidence" value="ECO:0000315"/>
    <property type="project" value="FlyBase"/>
</dbReference>
<dbReference type="GO" id="GO:0048477">
    <property type="term" value="P:oogenesis"/>
    <property type="evidence" value="ECO:0000315"/>
    <property type="project" value="FlyBase"/>
</dbReference>
<dbReference type="GO" id="GO:0045995">
    <property type="term" value="P:regulation of embryonic development"/>
    <property type="evidence" value="ECO:0000315"/>
    <property type="project" value="FlyBase"/>
</dbReference>
<dbReference type="CDD" id="cd00659">
    <property type="entry name" value="Topo_IB_C"/>
    <property type="match status" value="1"/>
</dbReference>
<dbReference type="CDD" id="cd03488">
    <property type="entry name" value="Topoisomer_IB_N_htopoI_like"/>
    <property type="match status" value="1"/>
</dbReference>
<dbReference type="FunFam" id="1.10.10.41:FF:000001">
    <property type="entry name" value="DNA topoisomerase I"/>
    <property type="match status" value="1"/>
</dbReference>
<dbReference type="FunFam" id="1.10.132.10:FF:000001">
    <property type="entry name" value="DNA topoisomerase I"/>
    <property type="match status" value="1"/>
</dbReference>
<dbReference type="FunFam" id="2.170.11.10:FF:000001">
    <property type="entry name" value="DNA topoisomerase I"/>
    <property type="match status" value="1"/>
</dbReference>
<dbReference type="FunFam" id="3.90.15.10:FF:000001">
    <property type="entry name" value="DNA topoisomerase I"/>
    <property type="match status" value="1"/>
</dbReference>
<dbReference type="Gene3D" id="1.10.132.10">
    <property type="match status" value="1"/>
</dbReference>
<dbReference type="Gene3D" id="2.170.11.10">
    <property type="entry name" value="DNA Topoisomerase I, domain 2"/>
    <property type="match status" value="1"/>
</dbReference>
<dbReference type="Gene3D" id="3.90.15.10">
    <property type="entry name" value="Topoisomerase I, Chain A, domain 3"/>
    <property type="match status" value="1"/>
</dbReference>
<dbReference type="Gene3D" id="1.10.10.41">
    <property type="entry name" value="Yeast DNA topoisomerase - domain 1"/>
    <property type="match status" value="1"/>
</dbReference>
<dbReference type="InterPro" id="IPR011010">
    <property type="entry name" value="DNA_brk_join_enz"/>
</dbReference>
<dbReference type="InterPro" id="IPR013034">
    <property type="entry name" value="DNA_topo_DNA_db_N_dom1"/>
</dbReference>
<dbReference type="InterPro" id="IPR013030">
    <property type="entry name" value="DNA_topo_DNA_db_N_dom2"/>
</dbReference>
<dbReference type="InterPro" id="IPR001631">
    <property type="entry name" value="TopoI"/>
</dbReference>
<dbReference type="InterPro" id="IPR025834">
    <property type="entry name" value="TopoI_C_dom"/>
</dbReference>
<dbReference type="InterPro" id="IPR014711">
    <property type="entry name" value="TopoI_cat_a-hlx-sub_euk"/>
</dbReference>
<dbReference type="InterPro" id="IPR014727">
    <property type="entry name" value="TopoI_cat_a/b-sub_euk"/>
</dbReference>
<dbReference type="InterPro" id="IPR013500">
    <property type="entry name" value="TopoI_cat_euk"/>
</dbReference>
<dbReference type="InterPro" id="IPR008336">
    <property type="entry name" value="TopoI_DNA-bd_euk"/>
</dbReference>
<dbReference type="InterPro" id="IPR036202">
    <property type="entry name" value="TopoI_DNA-bd_euk_N_sf"/>
</dbReference>
<dbReference type="InterPro" id="IPR013499">
    <property type="entry name" value="TopoI_euk"/>
</dbReference>
<dbReference type="InterPro" id="IPR018521">
    <property type="entry name" value="TopoIB_AS"/>
</dbReference>
<dbReference type="InterPro" id="IPR048045">
    <property type="entry name" value="Topoisomer_I_DNA-bd"/>
</dbReference>
<dbReference type="InterPro" id="IPR051062">
    <property type="entry name" value="Topoisomerase_IB"/>
</dbReference>
<dbReference type="PANTHER" id="PTHR10290:SF3">
    <property type="entry name" value="DNA TOPOISOMERASE 1"/>
    <property type="match status" value="1"/>
</dbReference>
<dbReference type="PANTHER" id="PTHR10290">
    <property type="entry name" value="DNA TOPOISOMERASE I"/>
    <property type="match status" value="1"/>
</dbReference>
<dbReference type="Pfam" id="PF14370">
    <property type="entry name" value="Topo_C_assoc"/>
    <property type="match status" value="1"/>
</dbReference>
<dbReference type="Pfam" id="PF01028">
    <property type="entry name" value="Topoisom_I"/>
    <property type="match status" value="1"/>
</dbReference>
<dbReference type="Pfam" id="PF02919">
    <property type="entry name" value="Topoisom_I_N"/>
    <property type="match status" value="1"/>
</dbReference>
<dbReference type="PRINTS" id="PR00416">
    <property type="entry name" value="EUTPISMRASEI"/>
</dbReference>
<dbReference type="SMART" id="SM00435">
    <property type="entry name" value="TOPEUc"/>
    <property type="match status" value="1"/>
</dbReference>
<dbReference type="SUPFAM" id="SSF56349">
    <property type="entry name" value="DNA breaking-rejoining enzymes"/>
    <property type="match status" value="1"/>
</dbReference>
<dbReference type="SUPFAM" id="SSF46596">
    <property type="entry name" value="Eukaryotic DNA topoisomerase I, dispensable insert domain"/>
    <property type="match status" value="1"/>
</dbReference>
<dbReference type="SUPFAM" id="SSF56741">
    <property type="entry name" value="Eukaryotic DNA topoisomerase I, N-terminal DNA-binding fragment"/>
    <property type="match status" value="1"/>
</dbReference>
<dbReference type="PROSITE" id="PS00176">
    <property type="entry name" value="TOPO_IB_1"/>
    <property type="match status" value="1"/>
</dbReference>
<dbReference type="PROSITE" id="PS52038">
    <property type="entry name" value="TOPO_IB_2"/>
    <property type="match status" value="1"/>
</dbReference>
<name>TOP1_DROME</name>
<gene>
    <name evidence="10" type="primary">Top1</name>
    <name evidence="10" type="ORF">CG6146</name>
</gene>
<evidence type="ECO:0000250" key="1"/>
<evidence type="ECO:0000250" key="2">
    <source>
        <dbReference type="UniProtKB" id="Q13472"/>
    </source>
</evidence>
<evidence type="ECO:0000255" key="3">
    <source>
        <dbReference type="PROSITE-ProRule" id="PRU01382"/>
    </source>
</evidence>
<evidence type="ECO:0000255" key="4">
    <source>
        <dbReference type="PROSITE-ProRule" id="PRU10130"/>
    </source>
</evidence>
<evidence type="ECO:0000256" key="5">
    <source>
        <dbReference type="SAM" id="MobiDB-lite"/>
    </source>
</evidence>
<evidence type="ECO:0000269" key="6">
    <source>
    </source>
</evidence>
<evidence type="ECO:0000269" key="7">
    <source>
    </source>
</evidence>
<evidence type="ECO:0000269" key="8">
    <source>
    </source>
</evidence>
<evidence type="ECO:0000305" key="9"/>
<evidence type="ECO:0000312" key="10">
    <source>
        <dbReference type="FlyBase" id="FBgn0004924"/>
    </source>
</evidence>
<comment type="function">
    <text evidence="2">Releases the supercoiling and torsional tension of DNA introduced during the DNA replication and transcription by transiently cleaving and rejoining one strand of the DNA duplex (By similarity). Introduces a single-strand break via transesterification at a target site in duplex DNA (By similarity). The scissile phosphodiester is attacked by the catalytic tyrosine of the enzyme, resulting in the formation of a DNA-(3'-phosphotyrosyl)-enzyme intermediate and the expulsion of a 5'-OH DNA strand (By similarity). The free DNA strand then undergoes passage around the unbroken strand thus removing DNA supercoils (By similarity). Finally, in the religation step, the DNA 5'-OH attacks the covalent intermediate to expel the active-site tyrosine and restore the DNA phosphodiester backbone (By similarity).</text>
</comment>
<comment type="catalytic activity">
    <reaction evidence="4">
        <text>ATP-independent breakage of single-stranded DNA, followed by passage and rejoining.</text>
        <dbReference type="EC" id="5.6.2.1"/>
    </reaction>
</comment>
<comment type="subunit">
    <text evidence="7">Interacts with Topors.</text>
</comment>
<comment type="subcellular location">
    <subcellularLocation>
        <location evidence="6">Nucleus</location>
    </subcellularLocation>
    <subcellularLocation>
        <location evidence="6">Cytoplasm</location>
    </subcellularLocation>
    <text evidence="6">During early cell divisions of developing embryos, it is detected in the nucleus at interphase then diffusely dispersed in the cytoplasm at metaphase.</text>
</comment>
<comment type="developmental stage">
    <text evidence="6">Detected in germline and follicle cells. Expressed in follicle cells throughout oogenesis. In germline cells, expression levels increase as cells develop and move to the posterior region of the germarium, then at stage 5 of egg chamber development levels decrease until it is no longer detected (at protein level).</text>
</comment>
<comment type="miscellaneous">
    <text>Eukaryotic topoisomerase I and II can relax both negative and positive supercoils, whereas prokaryotic enzymes relax only negative supercoils.</text>
</comment>
<comment type="similarity">
    <text evidence="9">Belongs to the type IB topoisomerase family.</text>
</comment>